<evidence type="ECO:0000250" key="1"/>
<evidence type="ECO:0000250" key="2">
    <source>
        <dbReference type="UniProtKB" id="Q8N9A8"/>
    </source>
</evidence>
<evidence type="ECO:0000255" key="3"/>
<evidence type="ECO:0000305" key="4"/>
<reference key="1">
    <citation type="submission" date="2004-11" db="EMBL/GenBank/DDBJ databases">
        <authorList>
            <consortium name="The German cDNA consortium"/>
        </authorList>
    </citation>
    <scope>NUCLEOTIDE SEQUENCE [LARGE SCALE MRNA]</scope>
    <source>
        <tissue>Brain cortex</tissue>
    </source>
</reference>
<dbReference type="EMBL" id="CR860118">
    <property type="protein sequence ID" value="CAH92263.1"/>
    <property type="molecule type" value="mRNA"/>
</dbReference>
<dbReference type="RefSeq" id="NP_001126325.1">
    <property type="nucleotide sequence ID" value="NM_001132853.1"/>
</dbReference>
<dbReference type="SMR" id="Q5R7J7"/>
<dbReference type="FunCoup" id="Q5R7J7">
    <property type="interactions" value="2073"/>
</dbReference>
<dbReference type="STRING" id="9601.ENSPPYP00000008284"/>
<dbReference type="Ensembl" id="ENSPPYT00000041694.1">
    <property type="protein sequence ID" value="ENSPPYP00000045029.1"/>
    <property type="gene ID" value="ENSPPYG00000007335.3"/>
</dbReference>
<dbReference type="GeneID" id="100173306"/>
<dbReference type="KEGG" id="pon:100173306"/>
<dbReference type="CTD" id="255919"/>
<dbReference type="eggNOG" id="KOG4606">
    <property type="taxonomic scope" value="Eukaryota"/>
</dbReference>
<dbReference type="GeneTree" id="ENSGT00390000008576"/>
<dbReference type="HOGENOM" id="CLU_138149_1_0_1"/>
<dbReference type="InParanoid" id="Q5R7J7"/>
<dbReference type="OrthoDB" id="5786980at2759"/>
<dbReference type="TreeFam" id="TF313179"/>
<dbReference type="Proteomes" id="UP000001595">
    <property type="component" value="Chromosome 16"/>
</dbReference>
<dbReference type="GO" id="GO:0005737">
    <property type="term" value="C:cytoplasm"/>
    <property type="evidence" value="ECO:0000250"/>
    <property type="project" value="UniProtKB"/>
</dbReference>
<dbReference type="GO" id="GO:0071595">
    <property type="term" value="C:Nem1-Spo7 phosphatase complex"/>
    <property type="evidence" value="ECO:0000250"/>
    <property type="project" value="UniProtKB"/>
</dbReference>
<dbReference type="GO" id="GO:0031965">
    <property type="term" value="C:nuclear membrane"/>
    <property type="evidence" value="ECO:0000250"/>
    <property type="project" value="UniProtKB"/>
</dbReference>
<dbReference type="GO" id="GO:0019888">
    <property type="term" value="F:protein phosphatase regulator activity"/>
    <property type="evidence" value="ECO:0000250"/>
    <property type="project" value="UniProtKB"/>
</dbReference>
<dbReference type="GO" id="GO:0006629">
    <property type="term" value="P:lipid metabolic process"/>
    <property type="evidence" value="ECO:0007669"/>
    <property type="project" value="UniProtKB-KW"/>
</dbReference>
<dbReference type="GO" id="GO:0010867">
    <property type="term" value="P:positive regulation of triglyceride biosynthetic process"/>
    <property type="evidence" value="ECO:0000250"/>
    <property type="project" value="UniProtKB"/>
</dbReference>
<dbReference type="GO" id="GO:0034504">
    <property type="term" value="P:protein localization to nucleus"/>
    <property type="evidence" value="ECO:0000250"/>
    <property type="project" value="UniProtKB"/>
</dbReference>
<dbReference type="InterPro" id="IPR019168">
    <property type="entry name" value="NEP1-R1"/>
</dbReference>
<dbReference type="PANTHER" id="PTHR20996">
    <property type="entry name" value="NUCLEAR ENVELOPE PHOSPHATASE-REGULATORY SUBUNIT 1"/>
    <property type="match status" value="1"/>
</dbReference>
<dbReference type="PANTHER" id="PTHR20996:SF1">
    <property type="entry name" value="NUCLEAR ENVELOPE PHOSPHATASE-REGULATORY SUBUNIT 1"/>
    <property type="match status" value="1"/>
</dbReference>
<dbReference type="Pfam" id="PF09771">
    <property type="entry name" value="Tmemb_18A"/>
    <property type="match status" value="1"/>
</dbReference>
<organism>
    <name type="scientific">Pongo abelii</name>
    <name type="common">Sumatran orangutan</name>
    <name type="synonym">Pongo pygmaeus abelii</name>
    <dbReference type="NCBI Taxonomy" id="9601"/>
    <lineage>
        <taxon>Eukaryota</taxon>
        <taxon>Metazoa</taxon>
        <taxon>Chordata</taxon>
        <taxon>Craniata</taxon>
        <taxon>Vertebrata</taxon>
        <taxon>Euteleostomi</taxon>
        <taxon>Mammalia</taxon>
        <taxon>Eutheria</taxon>
        <taxon>Euarchontoglires</taxon>
        <taxon>Primates</taxon>
        <taxon>Haplorrhini</taxon>
        <taxon>Catarrhini</taxon>
        <taxon>Hominidae</taxon>
        <taxon>Pongo</taxon>
    </lineage>
</organism>
<proteinExistence type="evidence at transcript level"/>
<accession>Q5R7J7</accession>
<comment type="function">
    <text evidence="1">Forms with the serine/threonine protein phosphatase CTDNEP1 an active complex which dephosphorylates and may activate LPIN1 and LPIN2. LPIN1 and LPIN2 are phosphatidate phosphatases that catalyze the conversion of phosphatidic acid to diacylglycerol and control the metabolism of fatty acids at different levels. May indirectly modulate the lipid composition of nuclear and/or endoplasmic reticulum membranes and be required for proper nuclear membrane morphology and/or dynamics. May also indirectly regulate the production of lipid droplets and triacylglycerol (By similarity).</text>
</comment>
<comment type="subunit">
    <text evidence="1">Interacts with CTDNEP1; the complex dephosphorylates LPIN1 and LPIN2.</text>
</comment>
<comment type="subcellular location">
    <subcellularLocation>
        <location evidence="1">Nucleus membrane</location>
        <topology evidence="1">Multi-pass membrane protein</topology>
    </subcellularLocation>
    <subcellularLocation>
        <location evidence="1">Cytoplasm</location>
    </subcellularLocation>
    <text evidence="1">Filamentous pattern in the cytoplasm.</text>
</comment>
<comment type="similarity">
    <text evidence="4">Belongs to the CNEP1R1 family.</text>
</comment>
<gene>
    <name type="primary">CNEP1R1</name>
    <name type="synonym">TMEM188</name>
</gene>
<keyword id="KW-0007">Acetylation</keyword>
<keyword id="KW-0963">Cytoplasm</keyword>
<keyword id="KW-0443">Lipid metabolism</keyword>
<keyword id="KW-0472">Membrane</keyword>
<keyword id="KW-0539">Nucleus</keyword>
<keyword id="KW-1185">Reference proteome</keyword>
<keyword id="KW-0812">Transmembrane</keyword>
<keyword id="KW-1133">Transmembrane helix</keyword>
<sequence>MNSLEQAEDLKAFERRLTEYIHCLQPATGRWRMLLIVVSVCTATGAWNWLIDPETQKVSFFTSLWNHPFFTISCITLIGLFFAGIHKRVVAPSIIAARCRTVLAEYNMSCDDTGKLILKPRPHVQ</sequence>
<name>NEPR1_PONAB</name>
<protein>
    <recommendedName>
        <fullName>Nuclear envelope phosphatase-regulatory subunit 1</fullName>
    </recommendedName>
    <alternativeName>
        <fullName>Transmembrane protein 188</fullName>
    </alternativeName>
</protein>
<feature type="chain" id="PRO_0000286617" description="Nuclear envelope phosphatase-regulatory subunit 1">
    <location>
        <begin position="1"/>
        <end position="125"/>
    </location>
</feature>
<feature type="transmembrane region" description="Helical" evidence="3">
    <location>
        <begin position="33"/>
        <end position="53"/>
    </location>
</feature>
<feature type="transmembrane region" description="Helical" evidence="3">
    <location>
        <begin position="65"/>
        <end position="85"/>
    </location>
</feature>
<feature type="modified residue" description="N-acetylmethionine" evidence="2">
    <location>
        <position position="1"/>
    </location>
</feature>